<name>CH10_METI4</name>
<comment type="function">
    <text evidence="1">Together with the chaperonin GroEL, plays an essential role in assisting protein folding. The GroEL-GroES system forms a nano-cage that allows encapsulation of the non-native substrate proteins and provides a physical environment optimized to promote and accelerate protein folding. GroES binds to the apical surface of the GroEL ring, thereby capping the opening of the GroEL channel.</text>
</comment>
<comment type="subunit">
    <text evidence="1">Heptamer of 7 subunits arranged in a ring. Interacts with the chaperonin GroEL.</text>
</comment>
<comment type="subcellular location">
    <subcellularLocation>
        <location evidence="1">Cytoplasm</location>
    </subcellularLocation>
</comment>
<comment type="similarity">
    <text evidence="1">Belongs to the GroES chaperonin family.</text>
</comment>
<feature type="chain" id="PRO_1000129680" description="Co-chaperonin GroES">
    <location>
        <begin position="1"/>
        <end position="99"/>
    </location>
</feature>
<protein>
    <recommendedName>
        <fullName evidence="1">Co-chaperonin GroES</fullName>
    </recommendedName>
    <alternativeName>
        <fullName evidence="1">10 kDa chaperonin</fullName>
    </alternativeName>
    <alternativeName>
        <fullName evidence="1">Chaperonin-10</fullName>
        <shortName evidence="1">Cpn10</shortName>
    </alternativeName>
</protein>
<gene>
    <name evidence="1" type="primary">groES</name>
    <name evidence="1" type="synonym">groS</name>
    <name type="ordered locus">Minf_2177</name>
</gene>
<dbReference type="EMBL" id="CP000975">
    <property type="protein sequence ID" value="ACD84231.1"/>
    <property type="molecule type" value="Genomic_DNA"/>
</dbReference>
<dbReference type="RefSeq" id="WP_012464513.1">
    <property type="nucleotide sequence ID" value="NC_010794.1"/>
</dbReference>
<dbReference type="SMR" id="B3DZP6"/>
<dbReference type="STRING" id="481448.Minf_2177"/>
<dbReference type="KEGG" id="min:Minf_2177"/>
<dbReference type="eggNOG" id="COG0234">
    <property type="taxonomic scope" value="Bacteria"/>
</dbReference>
<dbReference type="HOGENOM" id="CLU_132825_2_0_0"/>
<dbReference type="OrthoDB" id="9806791at2"/>
<dbReference type="Proteomes" id="UP000009149">
    <property type="component" value="Chromosome"/>
</dbReference>
<dbReference type="GO" id="GO:0005737">
    <property type="term" value="C:cytoplasm"/>
    <property type="evidence" value="ECO:0007669"/>
    <property type="project" value="UniProtKB-SubCell"/>
</dbReference>
<dbReference type="GO" id="GO:0005524">
    <property type="term" value="F:ATP binding"/>
    <property type="evidence" value="ECO:0007669"/>
    <property type="project" value="InterPro"/>
</dbReference>
<dbReference type="GO" id="GO:0046872">
    <property type="term" value="F:metal ion binding"/>
    <property type="evidence" value="ECO:0007669"/>
    <property type="project" value="TreeGrafter"/>
</dbReference>
<dbReference type="GO" id="GO:0044183">
    <property type="term" value="F:protein folding chaperone"/>
    <property type="evidence" value="ECO:0007669"/>
    <property type="project" value="InterPro"/>
</dbReference>
<dbReference type="GO" id="GO:0051087">
    <property type="term" value="F:protein-folding chaperone binding"/>
    <property type="evidence" value="ECO:0007669"/>
    <property type="project" value="TreeGrafter"/>
</dbReference>
<dbReference type="GO" id="GO:0051082">
    <property type="term" value="F:unfolded protein binding"/>
    <property type="evidence" value="ECO:0007669"/>
    <property type="project" value="TreeGrafter"/>
</dbReference>
<dbReference type="GO" id="GO:0051085">
    <property type="term" value="P:chaperone cofactor-dependent protein refolding"/>
    <property type="evidence" value="ECO:0007669"/>
    <property type="project" value="TreeGrafter"/>
</dbReference>
<dbReference type="CDD" id="cd00320">
    <property type="entry name" value="cpn10"/>
    <property type="match status" value="1"/>
</dbReference>
<dbReference type="FunFam" id="2.30.33.40:FF:000001">
    <property type="entry name" value="10 kDa chaperonin"/>
    <property type="match status" value="1"/>
</dbReference>
<dbReference type="Gene3D" id="2.30.33.40">
    <property type="entry name" value="GroES chaperonin"/>
    <property type="match status" value="1"/>
</dbReference>
<dbReference type="HAMAP" id="MF_00580">
    <property type="entry name" value="CH10"/>
    <property type="match status" value="1"/>
</dbReference>
<dbReference type="InterPro" id="IPR020818">
    <property type="entry name" value="Chaperonin_GroES"/>
</dbReference>
<dbReference type="InterPro" id="IPR037124">
    <property type="entry name" value="Chaperonin_GroES_sf"/>
</dbReference>
<dbReference type="InterPro" id="IPR018369">
    <property type="entry name" value="Chaprnonin_Cpn10_CS"/>
</dbReference>
<dbReference type="InterPro" id="IPR011032">
    <property type="entry name" value="GroES-like_sf"/>
</dbReference>
<dbReference type="NCBIfam" id="NF001531">
    <property type="entry name" value="PRK00364.2-2"/>
    <property type="match status" value="1"/>
</dbReference>
<dbReference type="NCBIfam" id="NF001533">
    <property type="entry name" value="PRK00364.2-4"/>
    <property type="match status" value="1"/>
</dbReference>
<dbReference type="NCBIfam" id="NF001534">
    <property type="entry name" value="PRK00364.2-5"/>
    <property type="match status" value="1"/>
</dbReference>
<dbReference type="PANTHER" id="PTHR10772">
    <property type="entry name" value="10 KDA HEAT SHOCK PROTEIN"/>
    <property type="match status" value="1"/>
</dbReference>
<dbReference type="PANTHER" id="PTHR10772:SF63">
    <property type="entry name" value="20 KDA CHAPERONIN, CHLOROPLASTIC"/>
    <property type="match status" value="1"/>
</dbReference>
<dbReference type="Pfam" id="PF00166">
    <property type="entry name" value="Cpn10"/>
    <property type="match status" value="1"/>
</dbReference>
<dbReference type="PRINTS" id="PR00297">
    <property type="entry name" value="CHAPERONIN10"/>
</dbReference>
<dbReference type="SMART" id="SM00883">
    <property type="entry name" value="Cpn10"/>
    <property type="match status" value="1"/>
</dbReference>
<dbReference type="SUPFAM" id="SSF50129">
    <property type="entry name" value="GroES-like"/>
    <property type="match status" value="1"/>
</dbReference>
<dbReference type="PROSITE" id="PS00681">
    <property type="entry name" value="CHAPERONINS_CPN10"/>
    <property type="match status" value="1"/>
</dbReference>
<proteinExistence type="inferred from homology"/>
<sequence length="99" mass="10887">MVEPKIRPLGERVLVKLIEEQEVRKGGIIIPDTAKEKPQEATVIAVGPGKLDENGKRIPIEVKKGDKVLISKYGGTEVKIDGESFQILREDDILAIIEG</sequence>
<evidence type="ECO:0000255" key="1">
    <source>
        <dbReference type="HAMAP-Rule" id="MF_00580"/>
    </source>
</evidence>
<keyword id="KW-0143">Chaperone</keyword>
<keyword id="KW-0963">Cytoplasm</keyword>
<organism>
    <name type="scientific">Methylacidiphilum infernorum (isolate V4)</name>
    <name type="common">Methylokorus infernorum (strain V4)</name>
    <dbReference type="NCBI Taxonomy" id="481448"/>
    <lineage>
        <taxon>Bacteria</taxon>
        <taxon>Pseudomonadati</taxon>
        <taxon>Verrucomicrobiota</taxon>
        <taxon>Methylacidiphilae</taxon>
        <taxon>Methylacidiphilales</taxon>
        <taxon>Methylacidiphilaceae</taxon>
        <taxon>Methylacidiphilum (ex Ratnadevi et al. 2023)</taxon>
    </lineage>
</organism>
<accession>B3DZP6</accession>
<reference key="1">
    <citation type="journal article" date="2008" name="Biol. Direct">
        <title>Complete genome sequence of the extremely acidophilic methanotroph isolate V4, Methylacidiphilum infernorum, a representative of the bacterial phylum Verrucomicrobia.</title>
        <authorList>
            <person name="Hou S."/>
            <person name="Makarova K.S."/>
            <person name="Saw J.H."/>
            <person name="Senin P."/>
            <person name="Ly B.V."/>
            <person name="Zhou Z."/>
            <person name="Ren Y."/>
            <person name="Wang J."/>
            <person name="Galperin M.Y."/>
            <person name="Omelchenko M.V."/>
            <person name="Wolf Y.I."/>
            <person name="Yutin N."/>
            <person name="Koonin E.V."/>
            <person name="Stott M.B."/>
            <person name="Mountain B.W."/>
            <person name="Crowe M.A."/>
            <person name="Smirnova A.V."/>
            <person name="Dunfield P.F."/>
            <person name="Feng L."/>
            <person name="Wang L."/>
            <person name="Alam M."/>
        </authorList>
    </citation>
    <scope>NUCLEOTIDE SEQUENCE [LARGE SCALE GENOMIC DNA]</scope>
    <source>
        <strain>Isolate V4</strain>
    </source>
</reference>